<organism>
    <name type="scientific">Meyerozyma guilliermondii (strain ATCC 6260 / CBS 566 / DSM 6381 / JCM 1539 / NBRC 10279 / NRRL Y-324)</name>
    <name type="common">Yeast</name>
    <name type="synonym">Candida guilliermondii</name>
    <dbReference type="NCBI Taxonomy" id="294746"/>
    <lineage>
        <taxon>Eukaryota</taxon>
        <taxon>Fungi</taxon>
        <taxon>Dikarya</taxon>
        <taxon>Ascomycota</taxon>
        <taxon>Saccharomycotina</taxon>
        <taxon>Pichiomycetes</taxon>
        <taxon>Debaryomycetaceae</taxon>
        <taxon>Meyerozyma</taxon>
    </lineage>
</organism>
<feature type="chain" id="PRO_0000405444" description="Cytochrome c oxidase assembly factor 3, mitochondrial">
    <location>
        <begin position="1"/>
        <end position="93"/>
    </location>
</feature>
<feature type="topological domain" description="Mitochondrial matrix" evidence="1">
    <location>
        <begin position="1"/>
        <end position="43"/>
    </location>
</feature>
<feature type="transmembrane region" description="Helical" evidence="2">
    <location>
        <begin position="44"/>
        <end position="64"/>
    </location>
</feature>
<feature type="topological domain" description="Mitochondrial intermembrane" evidence="1">
    <location>
        <begin position="65"/>
        <end position="93"/>
    </location>
</feature>
<name>COA3_PICGU</name>
<dbReference type="EMBL" id="CH408159">
    <property type="protein sequence ID" value="EDK40080.2"/>
    <property type="molecule type" value="Genomic_DNA"/>
</dbReference>
<dbReference type="RefSeq" id="XP_001483449.1">
    <property type="nucleotide sequence ID" value="XM_001483399.1"/>
</dbReference>
<dbReference type="FunCoup" id="A5DLM7">
    <property type="interactions" value="27"/>
</dbReference>
<dbReference type="STRING" id="294746.A5DLM7"/>
<dbReference type="GeneID" id="5125109"/>
<dbReference type="KEGG" id="pgu:PGUG_04178"/>
<dbReference type="VEuPathDB" id="FungiDB:PGUG_04178"/>
<dbReference type="eggNOG" id="ENOG502S440">
    <property type="taxonomic scope" value="Eukaryota"/>
</dbReference>
<dbReference type="HOGENOM" id="CLU_153999_0_0_1"/>
<dbReference type="InParanoid" id="A5DLM7"/>
<dbReference type="OMA" id="WKMTPAM"/>
<dbReference type="OrthoDB" id="10018333at2759"/>
<dbReference type="Proteomes" id="UP000001997">
    <property type="component" value="Unassembled WGS sequence"/>
</dbReference>
<dbReference type="GO" id="GO:0005743">
    <property type="term" value="C:mitochondrial inner membrane"/>
    <property type="evidence" value="ECO:0007669"/>
    <property type="project" value="UniProtKB-SubCell"/>
</dbReference>
<dbReference type="GO" id="GO:0033617">
    <property type="term" value="P:mitochondrial cytochrome c oxidase assembly"/>
    <property type="evidence" value="ECO:0007669"/>
    <property type="project" value="InterPro"/>
</dbReference>
<dbReference type="InterPro" id="IPR041752">
    <property type="entry name" value="Coa3"/>
</dbReference>
<dbReference type="InterPro" id="IPR018628">
    <property type="entry name" value="Coa3_cc"/>
</dbReference>
<dbReference type="PANTHER" id="PTHR15642:SF3">
    <property type="entry name" value="CYTOCHROME C OXIDASE ASSEMBLY FACTOR 3 HOMOLOG, MITOCHONDRIAL"/>
    <property type="match status" value="1"/>
</dbReference>
<dbReference type="PANTHER" id="PTHR15642">
    <property type="entry name" value="CYTOCHROME C OXIDASE ASSEMBLY FACTOR 3, MITOCHONDRIAL"/>
    <property type="match status" value="1"/>
</dbReference>
<dbReference type="Pfam" id="PF09813">
    <property type="entry name" value="Coa3_cc"/>
    <property type="match status" value="1"/>
</dbReference>
<accession>A5DLM7</accession>
<sequence>MKFPADSNLILIMPGHARYRDPKTFEMSPALVRVRAPYFWRNTLAFIVVGSIPLGVYAYTWSFLNKDEFSDIPIPPVSDEELAKLKKEYANKK</sequence>
<gene>
    <name type="primary">COA3</name>
    <name type="ORF">PGUG_04178</name>
</gene>
<reference key="1">
    <citation type="journal article" date="2009" name="Nature">
        <title>Evolution of pathogenicity and sexual reproduction in eight Candida genomes.</title>
        <authorList>
            <person name="Butler G."/>
            <person name="Rasmussen M.D."/>
            <person name="Lin M.F."/>
            <person name="Santos M.A.S."/>
            <person name="Sakthikumar S."/>
            <person name="Munro C.A."/>
            <person name="Rheinbay E."/>
            <person name="Grabherr M."/>
            <person name="Forche A."/>
            <person name="Reedy J.L."/>
            <person name="Agrafioti I."/>
            <person name="Arnaud M.B."/>
            <person name="Bates S."/>
            <person name="Brown A.J.P."/>
            <person name="Brunke S."/>
            <person name="Costanzo M.C."/>
            <person name="Fitzpatrick D.A."/>
            <person name="de Groot P.W.J."/>
            <person name="Harris D."/>
            <person name="Hoyer L.L."/>
            <person name="Hube B."/>
            <person name="Klis F.M."/>
            <person name="Kodira C."/>
            <person name="Lennard N."/>
            <person name="Logue M.E."/>
            <person name="Martin R."/>
            <person name="Neiman A.M."/>
            <person name="Nikolaou E."/>
            <person name="Quail M.A."/>
            <person name="Quinn J."/>
            <person name="Santos M.C."/>
            <person name="Schmitzberger F.F."/>
            <person name="Sherlock G."/>
            <person name="Shah P."/>
            <person name="Silverstein K.A.T."/>
            <person name="Skrzypek M.S."/>
            <person name="Soll D."/>
            <person name="Staggs R."/>
            <person name="Stansfield I."/>
            <person name="Stumpf M.P.H."/>
            <person name="Sudbery P.E."/>
            <person name="Srikantha T."/>
            <person name="Zeng Q."/>
            <person name="Berman J."/>
            <person name="Berriman M."/>
            <person name="Heitman J."/>
            <person name="Gow N.A.R."/>
            <person name="Lorenz M.C."/>
            <person name="Birren B.W."/>
            <person name="Kellis M."/>
            <person name="Cuomo C.A."/>
        </authorList>
    </citation>
    <scope>NUCLEOTIDE SEQUENCE [LARGE SCALE GENOMIC DNA]</scope>
    <source>
        <strain>ATCC 6260 / CBS 566 / DSM 6381 / JCM 1539 / NBRC 10279 / NRRL Y-324</strain>
    </source>
</reference>
<evidence type="ECO:0000250" key="1"/>
<evidence type="ECO:0000255" key="2"/>
<evidence type="ECO:0000305" key="3"/>
<keyword id="KW-0472">Membrane</keyword>
<keyword id="KW-0496">Mitochondrion</keyword>
<keyword id="KW-0999">Mitochondrion inner membrane</keyword>
<keyword id="KW-1185">Reference proteome</keyword>
<keyword id="KW-0812">Transmembrane</keyword>
<keyword id="KW-1133">Transmembrane helix</keyword>
<comment type="function">
    <text evidence="1">Required for assembly of cytochrome c oxidase (complex IV).</text>
</comment>
<comment type="subunit">
    <text evidence="1">Component of 250-400 kDa complexes called cytochrome oxidase assembly intermediates or COA complexes.</text>
</comment>
<comment type="subcellular location">
    <subcellularLocation>
        <location>Mitochondrion inner membrane</location>
        <topology>Single-pass membrane protein</topology>
    </subcellularLocation>
</comment>
<comment type="similarity">
    <text evidence="3">Belongs to the COA3 family.</text>
</comment>
<protein>
    <recommendedName>
        <fullName>Cytochrome c oxidase assembly factor 3, mitochondrial</fullName>
    </recommendedName>
</protein>
<proteinExistence type="inferred from homology"/>